<evidence type="ECO:0000255" key="1">
    <source>
        <dbReference type="HAMAP-Rule" id="MF_00327"/>
    </source>
</evidence>
<evidence type="ECO:0000305" key="2"/>
<name>RL37A_NANEQ</name>
<comment type="function">
    <text evidence="1">Binds to the 23S rRNA.</text>
</comment>
<comment type="cofactor">
    <cofactor evidence="1">
        <name>Zn(2+)</name>
        <dbReference type="ChEBI" id="CHEBI:29105"/>
    </cofactor>
    <text evidence="1">Binds 1 zinc ion per subunit.</text>
</comment>
<comment type="subunit">
    <text evidence="1">Part of the 50S ribosomal subunit.</text>
</comment>
<comment type="similarity">
    <text evidence="1">Belongs to the eukaryotic ribosomal protein eL43 family. Putative zinc-binding subfamily.</text>
</comment>
<keyword id="KW-0479">Metal-binding</keyword>
<keyword id="KW-1185">Reference proteome</keyword>
<keyword id="KW-0687">Ribonucleoprotein</keyword>
<keyword id="KW-0689">Ribosomal protein</keyword>
<keyword id="KW-0694">RNA-binding</keyword>
<keyword id="KW-0699">rRNA-binding</keyword>
<keyword id="KW-0862">Zinc</keyword>
<keyword id="KW-0863">Zinc-finger</keyword>
<feature type="chain" id="PRO_0000139847" description="Large ribosomal subunit protein eL43">
    <location>
        <begin position="1"/>
        <end position="86"/>
    </location>
</feature>
<feature type="zinc finger region" description="C4-type" evidence="1">
    <location>
        <begin position="40"/>
        <end position="61"/>
    </location>
</feature>
<feature type="binding site" evidence="1">
    <location>
        <position position="40"/>
    </location>
    <ligand>
        <name>Zn(2+)</name>
        <dbReference type="ChEBI" id="CHEBI:29105"/>
    </ligand>
</feature>
<feature type="binding site" evidence="1">
    <location>
        <position position="43"/>
    </location>
    <ligand>
        <name>Zn(2+)</name>
        <dbReference type="ChEBI" id="CHEBI:29105"/>
    </ligand>
</feature>
<feature type="binding site" evidence="1">
    <location>
        <position position="58"/>
    </location>
    <ligand>
        <name>Zn(2+)</name>
        <dbReference type="ChEBI" id="CHEBI:29105"/>
    </ligand>
</feature>
<feature type="binding site" evidence="1">
    <location>
        <position position="61"/>
    </location>
    <ligand>
        <name>Zn(2+)</name>
        <dbReference type="ChEBI" id="CHEBI:29105"/>
    </ligand>
</feature>
<sequence>MAFSHTKKVGPTGRFGPRYGLGIRKRVLTVEIKQRKKHVCPFCRSKAVIREAYGIYRCKKCGKQFTGLAYYPYEHLHEYYKIRGGQ</sequence>
<proteinExistence type="inferred from homology"/>
<protein>
    <recommendedName>
        <fullName evidence="1">Large ribosomal subunit protein eL43</fullName>
    </recommendedName>
    <alternativeName>
        <fullName evidence="2">50S ribosomal protein L37Ae</fullName>
    </alternativeName>
    <alternativeName>
        <fullName evidence="1">Ribosomal protein L43e</fullName>
    </alternativeName>
</protein>
<organism>
    <name type="scientific">Nanoarchaeum equitans (strain Kin4-M)</name>
    <dbReference type="NCBI Taxonomy" id="228908"/>
    <lineage>
        <taxon>Archaea</taxon>
        <taxon>Nanobdellota</taxon>
        <taxon>Candidatus Nanoarchaeia</taxon>
        <taxon>Nanoarchaeales</taxon>
        <taxon>Nanoarchaeaceae</taxon>
        <taxon>Nanoarchaeum</taxon>
    </lineage>
</organism>
<gene>
    <name evidence="1" type="primary">rpl37ae</name>
    <name type="ordered locus">NEQ038</name>
</gene>
<reference key="1">
    <citation type="journal article" date="2003" name="Proc. Natl. Acad. Sci. U.S.A.">
        <title>The genome of Nanoarchaeum equitans: insights into early archaeal evolution and derived parasitism.</title>
        <authorList>
            <person name="Waters E."/>
            <person name="Hohn M.J."/>
            <person name="Ahel I."/>
            <person name="Graham D.E."/>
            <person name="Adams M.D."/>
            <person name="Barnstead M."/>
            <person name="Beeson K.Y."/>
            <person name="Bibbs L."/>
            <person name="Bolanos R."/>
            <person name="Keller M."/>
            <person name="Kretz K."/>
            <person name="Lin X."/>
            <person name="Mathur E."/>
            <person name="Ni J."/>
            <person name="Podar M."/>
            <person name="Richardson T."/>
            <person name="Sutton G.G."/>
            <person name="Simon M."/>
            <person name="Soell D."/>
            <person name="Stetter K.O."/>
            <person name="Short J.M."/>
            <person name="Noorderwier M."/>
        </authorList>
    </citation>
    <scope>NUCLEOTIDE SEQUENCE [LARGE SCALE GENOMIC DNA]</scope>
    <source>
        <strain>Kin4-M</strain>
    </source>
</reference>
<dbReference type="EMBL" id="AE017199">
    <property type="protein sequence ID" value="AAR38892.1"/>
    <property type="molecule type" value="Genomic_DNA"/>
</dbReference>
<dbReference type="SMR" id="Q74N55"/>
<dbReference type="STRING" id="228908.NEQ038"/>
<dbReference type="EnsemblBacteria" id="AAR38892">
    <property type="protein sequence ID" value="AAR38892"/>
    <property type="gene ID" value="NEQ038"/>
</dbReference>
<dbReference type="KEGG" id="neq:NEQ038"/>
<dbReference type="PATRIC" id="fig|228908.8.peg.37"/>
<dbReference type="HOGENOM" id="CLU_141199_2_0_2"/>
<dbReference type="Proteomes" id="UP000000578">
    <property type="component" value="Chromosome"/>
</dbReference>
<dbReference type="GO" id="GO:1990904">
    <property type="term" value="C:ribonucleoprotein complex"/>
    <property type="evidence" value="ECO:0007669"/>
    <property type="project" value="UniProtKB-KW"/>
</dbReference>
<dbReference type="GO" id="GO:0005840">
    <property type="term" value="C:ribosome"/>
    <property type="evidence" value="ECO:0007669"/>
    <property type="project" value="UniProtKB-KW"/>
</dbReference>
<dbReference type="GO" id="GO:0070180">
    <property type="term" value="F:large ribosomal subunit rRNA binding"/>
    <property type="evidence" value="ECO:0007669"/>
    <property type="project" value="UniProtKB-UniRule"/>
</dbReference>
<dbReference type="GO" id="GO:0003735">
    <property type="term" value="F:structural constituent of ribosome"/>
    <property type="evidence" value="ECO:0007669"/>
    <property type="project" value="InterPro"/>
</dbReference>
<dbReference type="GO" id="GO:0008270">
    <property type="term" value="F:zinc ion binding"/>
    <property type="evidence" value="ECO:0007669"/>
    <property type="project" value="UniProtKB-UniRule"/>
</dbReference>
<dbReference type="GO" id="GO:0006412">
    <property type="term" value="P:translation"/>
    <property type="evidence" value="ECO:0007669"/>
    <property type="project" value="UniProtKB-UniRule"/>
</dbReference>
<dbReference type="Gene3D" id="2.20.25.30">
    <property type="match status" value="1"/>
</dbReference>
<dbReference type="HAMAP" id="MF_00327">
    <property type="entry name" value="Ribosomal_eL43"/>
    <property type="match status" value="1"/>
</dbReference>
<dbReference type="InterPro" id="IPR011331">
    <property type="entry name" value="Ribosomal_eL37/eL43"/>
</dbReference>
<dbReference type="InterPro" id="IPR002674">
    <property type="entry name" value="Ribosomal_eL43"/>
</dbReference>
<dbReference type="InterPro" id="IPR050522">
    <property type="entry name" value="Ribosomal_protein_eL43"/>
</dbReference>
<dbReference type="InterPro" id="IPR011332">
    <property type="entry name" value="Ribosomal_zn-bd"/>
</dbReference>
<dbReference type="NCBIfam" id="TIGR00280">
    <property type="entry name" value="eL43_euk_arch"/>
    <property type="match status" value="1"/>
</dbReference>
<dbReference type="NCBIfam" id="NF003058">
    <property type="entry name" value="PRK03976.1"/>
    <property type="match status" value="1"/>
</dbReference>
<dbReference type="PANTHER" id="PTHR48129">
    <property type="entry name" value="60S RIBOSOMAL PROTEIN L37A"/>
    <property type="match status" value="1"/>
</dbReference>
<dbReference type="PANTHER" id="PTHR48129:SF1">
    <property type="entry name" value="LARGE RIBOSOMAL SUBUNIT PROTEIN EL43"/>
    <property type="match status" value="1"/>
</dbReference>
<dbReference type="Pfam" id="PF01780">
    <property type="entry name" value="Ribosomal_L37ae"/>
    <property type="match status" value="1"/>
</dbReference>
<dbReference type="SUPFAM" id="SSF57829">
    <property type="entry name" value="Zn-binding ribosomal proteins"/>
    <property type="match status" value="1"/>
</dbReference>
<accession>Q74N55</accession>